<gene>
    <name evidence="1" type="primary">fadI</name>
    <name type="ordered locus">SEN2371</name>
</gene>
<feature type="chain" id="PRO_1000185973" description="3-ketoacyl-CoA thiolase">
    <location>
        <begin position="1"/>
        <end position="436"/>
    </location>
</feature>
<feature type="active site" description="Acyl-thioester intermediate" evidence="1">
    <location>
        <position position="99"/>
    </location>
</feature>
<feature type="active site" description="Proton acceptor" evidence="1">
    <location>
        <position position="392"/>
    </location>
</feature>
<feature type="active site" description="Proton acceptor" evidence="1">
    <location>
        <position position="422"/>
    </location>
</feature>
<accession>B5R3S0</accession>
<sequence>MRQALPLVTRQGDRIAIVSGLRTPFARQATAFHGIPAVDLGKMVVGELLARSEIPADAIEQLVFGQVVQMPEAPNIAREIVLGTGMNVHTDAYSVSRACATSFQAVANVAESLMAGTIRAGIAGGADSSSVLPIGVSKALARVLVDVNKARTTRQRLTLFSRLRLRDLLPVPPAVAEYSTGLRMGDTAEQMAKTYGITREQQDALAHRSHQRAAQAWAEGKLAEEVMTTYVPPYKNPFAEDNNIRGASTLADYAKLRPAFDRKHGSVTAANSTPLTDGAAAVIMMTESRAKELGLRPLGYLRSYAFTAIDVWQDMLLGPAWSTPLALERAGLTMADLTLFDMHEAFAAQTLANLQLLGSERFAREVLGRAQATGEVDDAKFNVLGGSIAYGHPFAATGARMITQTLHELRRRGGGFGLVTACAAGGLGAAMVLEAE</sequence>
<keyword id="KW-0012">Acyltransferase</keyword>
<keyword id="KW-0963">Cytoplasm</keyword>
<keyword id="KW-0276">Fatty acid metabolism</keyword>
<keyword id="KW-0442">Lipid degradation</keyword>
<keyword id="KW-0443">Lipid metabolism</keyword>
<keyword id="KW-0808">Transferase</keyword>
<comment type="function">
    <text evidence="1">Catalyzes the final step of fatty acid oxidation in which acetyl-CoA is released and the CoA ester of a fatty acid two carbons shorter is formed.</text>
</comment>
<comment type="catalytic activity">
    <reaction evidence="1">
        <text>an acyl-CoA + acetyl-CoA = a 3-oxoacyl-CoA + CoA</text>
        <dbReference type="Rhea" id="RHEA:21564"/>
        <dbReference type="ChEBI" id="CHEBI:57287"/>
        <dbReference type="ChEBI" id="CHEBI:57288"/>
        <dbReference type="ChEBI" id="CHEBI:58342"/>
        <dbReference type="ChEBI" id="CHEBI:90726"/>
        <dbReference type="EC" id="2.3.1.16"/>
    </reaction>
</comment>
<comment type="pathway">
    <text evidence="1">Lipid metabolism; fatty acid beta-oxidation.</text>
</comment>
<comment type="subunit">
    <text evidence="1">Heterotetramer of two alpha chains (FadJ) and two beta chains (FadI).</text>
</comment>
<comment type="subcellular location">
    <subcellularLocation>
        <location evidence="1">Cytoplasm</location>
    </subcellularLocation>
</comment>
<comment type="similarity">
    <text evidence="1">Belongs to the thiolase-like superfamily. Thiolase family.</text>
</comment>
<reference key="1">
    <citation type="journal article" date="2008" name="Genome Res.">
        <title>Comparative genome analysis of Salmonella enteritidis PT4 and Salmonella gallinarum 287/91 provides insights into evolutionary and host adaptation pathways.</title>
        <authorList>
            <person name="Thomson N.R."/>
            <person name="Clayton D.J."/>
            <person name="Windhorst D."/>
            <person name="Vernikos G."/>
            <person name="Davidson S."/>
            <person name="Churcher C."/>
            <person name="Quail M.A."/>
            <person name="Stevens M."/>
            <person name="Jones M.A."/>
            <person name="Watson M."/>
            <person name="Barron A."/>
            <person name="Layton A."/>
            <person name="Pickard D."/>
            <person name="Kingsley R.A."/>
            <person name="Bignell A."/>
            <person name="Clark L."/>
            <person name="Harris B."/>
            <person name="Ormond D."/>
            <person name="Abdellah Z."/>
            <person name="Brooks K."/>
            <person name="Cherevach I."/>
            <person name="Chillingworth T."/>
            <person name="Woodward J."/>
            <person name="Norberczak H."/>
            <person name="Lord A."/>
            <person name="Arrowsmith C."/>
            <person name="Jagels K."/>
            <person name="Moule S."/>
            <person name="Mungall K."/>
            <person name="Saunders M."/>
            <person name="Whitehead S."/>
            <person name="Chabalgoity J.A."/>
            <person name="Maskell D."/>
            <person name="Humphreys T."/>
            <person name="Roberts M."/>
            <person name="Barrow P.A."/>
            <person name="Dougan G."/>
            <person name="Parkhill J."/>
        </authorList>
    </citation>
    <scope>NUCLEOTIDE SEQUENCE [LARGE SCALE GENOMIC DNA]</scope>
    <source>
        <strain>P125109</strain>
    </source>
</reference>
<organism>
    <name type="scientific">Salmonella enteritidis PT4 (strain P125109)</name>
    <dbReference type="NCBI Taxonomy" id="550537"/>
    <lineage>
        <taxon>Bacteria</taxon>
        <taxon>Pseudomonadati</taxon>
        <taxon>Pseudomonadota</taxon>
        <taxon>Gammaproteobacteria</taxon>
        <taxon>Enterobacterales</taxon>
        <taxon>Enterobacteriaceae</taxon>
        <taxon>Salmonella</taxon>
    </lineage>
</organism>
<protein>
    <recommendedName>
        <fullName evidence="1">3-ketoacyl-CoA thiolase</fullName>
        <ecNumber evidence="1">2.3.1.16</ecNumber>
    </recommendedName>
    <alternativeName>
        <fullName evidence="1">ACSs</fullName>
    </alternativeName>
    <alternativeName>
        <fullName evidence="1">Acetyl-CoA acyltransferase</fullName>
    </alternativeName>
    <alternativeName>
        <fullName evidence="1">Acyl-CoA ligase</fullName>
    </alternativeName>
    <alternativeName>
        <fullName evidence="1">Beta-ketothiolase</fullName>
    </alternativeName>
    <alternativeName>
        <fullName evidence="1">Fatty acid oxidation complex subunit beta</fullName>
    </alternativeName>
</protein>
<name>FADI_SALEP</name>
<dbReference type="EC" id="2.3.1.16" evidence="1"/>
<dbReference type="EMBL" id="AM933172">
    <property type="protein sequence ID" value="CAR33955.1"/>
    <property type="molecule type" value="Genomic_DNA"/>
</dbReference>
<dbReference type="RefSeq" id="WP_001248128.1">
    <property type="nucleotide sequence ID" value="NC_011294.1"/>
</dbReference>
<dbReference type="SMR" id="B5R3S0"/>
<dbReference type="KEGG" id="set:SEN2371"/>
<dbReference type="HOGENOM" id="CLU_031026_2_0_6"/>
<dbReference type="UniPathway" id="UPA00659"/>
<dbReference type="Proteomes" id="UP000000613">
    <property type="component" value="Chromosome"/>
</dbReference>
<dbReference type="GO" id="GO:0005829">
    <property type="term" value="C:cytosol"/>
    <property type="evidence" value="ECO:0007669"/>
    <property type="project" value="TreeGrafter"/>
</dbReference>
<dbReference type="GO" id="GO:0003988">
    <property type="term" value="F:acetyl-CoA C-acyltransferase activity"/>
    <property type="evidence" value="ECO:0007669"/>
    <property type="project" value="UniProtKB-UniRule"/>
</dbReference>
<dbReference type="GO" id="GO:0006635">
    <property type="term" value="P:fatty acid beta-oxidation"/>
    <property type="evidence" value="ECO:0007669"/>
    <property type="project" value="UniProtKB-UniRule"/>
</dbReference>
<dbReference type="CDD" id="cd00751">
    <property type="entry name" value="thiolase"/>
    <property type="match status" value="1"/>
</dbReference>
<dbReference type="FunFam" id="3.40.47.10:FF:000011">
    <property type="entry name" value="3-ketoacyl-CoA thiolase"/>
    <property type="match status" value="1"/>
</dbReference>
<dbReference type="Gene3D" id="3.40.47.10">
    <property type="match status" value="1"/>
</dbReference>
<dbReference type="HAMAP" id="MF_01618">
    <property type="entry name" value="FadI"/>
    <property type="match status" value="1"/>
</dbReference>
<dbReference type="InterPro" id="IPR012806">
    <property type="entry name" value="Ac-CoA_C-AcTrfase_FadI"/>
</dbReference>
<dbReference type="InterPro" id="IPR002155">
    <property type="entry name" value="Thiolase"/>
</dbReference>
<dbReference type="InterPro" id="IPR016039">
    <property type="entry name" value="Thiolase-like"/>
</dbReference>
<dbReference type="InterPro" id="IPR020615">
    <property type="entry name" value="Thiolase_acyl_enz_int_AS"/>
</dbReference>
<dbReference type="InterPro" id="IPR020610">
    <property type="entry name" value="Thiolase_AS"/>
</dbReference>
<dbReference type="InterPro" id="IPR020617">
    <property type="entry name" value="Thiolase_C"/>
</dbReference>
<dbReference type="InterPro" id="IPR020613">
    <property type="entry name" value="Thiolase_CS"/>
</dbReference>
<dbReference type="InterPro" id="IPR020616">
    <property type="entry name" value="Thiolase_N"/>
</dbReference>
<dbReference type="NCBIfam" id="TIGR01930">
    <property type="entry name" value="AcCoA-C-Actrans"/>
    <property type="match status" value="1"/>
</dbReference>
<dbReference type="NCBIfam" id="TIGR02446">
    <property type="entry name" value="FadI"/>
    <property type="match status" value="1"/>
</dbReference>
<dbReference type="NCBIfam" id="NF006516">
    <property type="entry name" value="PRK08963.1"/>
    <property type="match status" value="1"/>
</dbReference>
<dbReference type="PANTHER" id="PTHR18919:SF107">
    <property type="entry name" value="ACETYL-COA ACETYLTRANSFERASE, CYTOSOLIC"/>
    <property type="match status" value="1"/>
</dbReference>
<dbReference type="PANTHER" id="PTHR18919">
    <property type="entry name" value="ACETYL-COA C-ACYLTRANSFERASE"/>
    <property type="match status" value="1"/>
</dbReference>
<dbReference type="Pfam" id="PF02803">
    <property type="entry name" value="Thiolase_C"/>
    <property type="match status" value="1"/>
</dbReference>
<dbReference type="Pfam" id="PF00108">
    <property type="entry name" value="Thiolase_N"/>
    <property type="match status" value="1"/>
</dbReference>
<dbReference type="PIRSF" id="PIRSF000429">
    <property type="entry name" value="Ac-CoA_Ac_transf"/>
    <property type="match status" value="1"/>
</dbReference>
<dbReference type="SUPFAM" id="SSF53901">
    <property type="entry name" value="Thiolase-like"/>
    <property type="match status" value="2"/>
</dbReference>
<dbReference type="PROSITE" id="PS00098">
    <property type="entry name" value="THIOLASE_1"/>
    <property type="match status" value="1"/>
</dbReference>
<dbReference type="PROSITE" id="PS00737">
    <property type="entry name" value="THIOLASE_2"/>
    <property type="match status" value="1"/>
</dbReference>
<dbReference type="PROSITE" id="PS00099">
    <property type="entry name" value="THIOLASE_3"/>
    <property type="match status" value="1"/>
</dbReference>
<evidence type="ECO:0000255" key="1">
    <source>
        <dbReference type="HAMAP-Rule" id="MF_01618"/>
    </source>
</evidence>
<proteinExistence type="inferred from homology"/>